<sequence>MSYTGFVQGSETTLQSTYCDTSAQPTCDYGYGTWNSGTNRGYENYGYGYGYGQDNTTNYGYGMATSHSWEMASSDTNANPSASGSASADSVLSRINQRLDMMPHLETDMIQGGVYGSGGGERYDSYEACDSRAILSERDLYRSSYDYGELDPEMEMAYEGQYDAYRDQFRMRGGDTFGPRAQGWARDARSGRPMASGYGRMWEDPMGARGQCMPGASRLPSLFSQNIIPEYGMFQGMRGGGAFSGGSRFGFGFGNGMKQMRRTWKTWTTADFRTKKKKRKQGGSPDEPDSKATRTDCSDNSDSDNDEGTEGEAAEGTESAEAMEKGSRVDGEDEEGKEDGREEGKEDPEKGALTAQDESSQAKRKLQASKKSQDKQKKRQRDRMVERIQFVCSLCKYRTFYEDEMGSHLDSKFHKEHFKYVGTKLPKQTADFLQEYVTNKTKKTEELRKTVEDLDGLIQQIYRDQDLTQEIAMEHFVKKVEAAHCAACDLFIPMQFGIIQKHLKTMDHNRNRRLMMEQSKKSSLMVARSILNNKLISKKLERYLKGENPFTDNPEEEKEQDEVEAGALDEGAPSEATELTEGVPAQPPVPLEPAPGTTTPPPPPPPEEEESPVPLLGGALQCQIRGIPGLDMEDDEEGGGGP</sequence>
<evidence type="ECO:0000250" key="1">
    <source>
        <dbReference type="UniProtKB" id="Q9ULX6"/>
    </source>
</evidence>
<evidence type="ECO:0000255" key="2"/>
<evidence type="ECO:0000255" key="3">
    <source>
        <dbReference type="PROSITE-ProRule" id="PRU01140"/>
    </source>
</evidence>
<evidence type="ECO:0000256" key="4">
    <source>
        <dbReference type="SAM" id="MobiDB-lite"/>
    </source>
</evidence>
<protein>
    <recommendedName>
        <fullName>A-kinase anchor protein 8-like</fullName>
        <shortName>AKAP8-like protein</shortName>
    </recommendedName>
    <alternativeName>
        <fullName>Neighbor of A-kinase-anchoring protein 95</fullName>
        <shortName>Neighbor of AKAP95</shortName>
    </alternativeName>
</protein>
<gene>
    <name type="primary">Akap8l</name>
    <name type="synonym">Nakap</name>
    <name type="synonym">Nakap95</name>
</gene>
<dbReference type="EMBL" id="AB028921">
    <property type="protein sequence ID" value="BAA84711.1"/>
    <property type="molecule type" value="mRNA"/>
</dbReference>
<dbReference type="FunCoup" id="Q9R0L7">
    <property type="interactions" value="2166"/>
</dbReference>
<dbReference type="IntAct" id="Q9R0L7">
    <property type="interactions" value="3"/>
</dbReference>
<dbReference type="MINT" id="Q9R0L7"/>
<dbReference type="STRING" id="10090.ENSMUSP00000051389"/>
<dbReference type="GlyGen" id="Q9R0L7">
    <property type="glycosylation" value="1 site, 1 O-linked glycan (1 site)"/>
</dbReference>
<dbReference type="iPTMnet" id="Q9R0L7"/>
<dbReference type="PhosphoSitePlus" id="Q9R0L7"/>
<dbReference type="SwissPalm" id="Q9R0L7"/>
<dbReference type="PaxDb" id="10090-ENSMUSP00000051389"/>
<dbReference type="PeptideAtlas" id="Q9R0L7"/>
<dbReference type="ProteomicsDB" id="285802"/>
<dbReference type="Pumba" id="Q9R0L7"/>
<dbReference type="AGR" id="MGI:1860606"/>
<dbReference type="MGI" id="MGI:1860606">
    <property type="gene designation" value="Akap8l"/>
</dbReference>
<dbReference type="eggNOG" id="ENOG502QSFC">
    <property type="taxonomic scope" value="Eukaryota"/>
</dbReference>
<dbReference type="InParanoid" id="Q9R0L7"/>
<dbReference type="PhylomeDB" id="Q9R0L7"/>
<dbReference type="Reactome" id="R-MMU-9772755">
    <property type="pathway name" value="Formation of WDR5-containing histone-modifying complexes"/>
</dbReference>
<dbReference type="ChiTaRS" id="Akap8l">
    <property type="organism name" value="mouse"/>
</dbReference>
<dbReference type="PRO" id="PR:Q9R0L7"/>
<dbReference type="Proteomes" id="UP000000589">
    <property type="component" value="Unplaced"/>
</dbReference>
<dbReference type="RNAct" id="Q9R0L7">
    <property type="molecule type" value="protein"/>
</dbReference>
<dbReference type="GO" id="GO:0005737">
    <property type="term" value="C:cytoplasm"/>
    <property type="evidence" value="ECO:0000250"/>
    <property type="project" value="UniProtKB"/>
</dbReference>
<dbReference type="GO" id="GO:0016363">
    <property type="term" value="C:nuclear matrix"/>
    <property type="evidence" value="ECO:0000314"/>
    <property type="project" value="UniProtKB"/>
</dbReference>
<dbReference type="GO" id="GO:0016607">
    <property type="term" value="C:nuclear speck"/>
    <property type="evidence" value="ECO:0007669"/>
    <property type="project" value="UniProtKB-SubCell"/>
</dbReference>
<dbReference type="GO" id="GO:0016605">
    <property type="term" value="C:PML body"/>
    <property type="evidence" value="ECO:0007669"/>
    <property type="project" value="UniProtKB-SubCell"/>
</dbReference>
<dbReference type="GO" id="GO:1990904">
    <property type="term" value="C:ribonucleoprotein complex"/>
    <property type="evidence" value="ECO:0000250"/>
    <property type="project" value="UniProtKB"/>
</dbReference>
<dbReference type="GO" id="GO:0003677">
    <property type="term" value="F:DNA binding"/>
    <property type="evidence" value="ECO:0007669"/>
    <property type="project" value="InterPro"/>
</dbReference>
<dbReference type="GO" id="GO:0008270">
    <property type="term" value="F:zinc ion binding"/>
    <property type="evidence" value="ECO:0007669"/>
    <property type="project" value="UniProtKB-KW"/>
</dbReference>
<dbReference type="GO" id="GO:0010793">
    <property type="term" value="P:regulation of mRNA export from nucleus"/>
    <property type="evidence" value="ECO:0000250"/>
    <property type="project" value="UniProtKB"/>
</dbReference>
<dbReference type="InterPro" id="IPR007071">
    <property type="entry name" value="AKAP95"/>
</dbReference>
<dbReference type="InterPro" id="IPR034736">
    <property type="entry name" value="ZF_C2H2_AKAP95"/>
</dbReference>
<dbReference type="PANTHER" id="PTHR12190:SF4">
    <property type="entry name" value="A-KINASE ANCHOR PROTEIN 8-LIKE"/>
    <property type="match status" value="1"/>
</dbReference>
<dbReference type="PANTHER" id="PTHR12190">
    <property type="entry name" value="A-KINASE ANCHOR PROTEIN AKAP 8"/>
    <property type="match status" value="1"/>
</dbReference>
<dbReference type="Pfam" id="PF04988">
    <property type="entry name" value="AKAP95"/>
    <property type="match status" value="1"/>
</dbReference>
<dbReference type="PROSITE" id="PS51799">
    <property type="entry name" value="ZF_C2H2_AKAP95"/>
    <property type="match status" value="2"/>
</dbReference>
<keyword id="KW-0007">Acetylation</keyword>
<keyword id="KW-0963">Cytoplasm</keyword>
<keyword id="KW-0903">Direct protein sequencing</keyword>
<keyword id="KW-0479">Metal-binding</keyword>
<keyword id="KW-0488">Methylation</keyword>
<keyword id="KW-0539">Nucleus</keyword>
<keyword id="KW-0597">Phosphoprotein</keyword>
<keyword id="KW-1185">Reference proteome</keyword>
<keyword id="KW-0677">Repeat</keyword>
<keyword id="KW-0804">Transcription</keyword>
<keyword id="KW-0805">Transcription regulation</keyword>
<keyword id="KW-0862">Zinc</keyword>
<keyword id="KW-0863">Zinc-finger</keyword>
<proteinExistence type="evidence at protein level"/>
<reference key="1">
    <citation type="submission" date="1999-06" db="EMBL/GenBank/DDBJ databases">
        <title>Mouse NAKAP95.</title>
        <authorList>
            <person name="Hattori A."/>
            <person name="Seki N."/>
            <person name="Hayashi A."/>
            <person name="Kozuma S."/>
            <person name="Muramatsu M.-A."/>
            <person name="Miyajima N."/>
            <person name="Saito T."/>
        </authorList>
    </citation>
    <scope>NUCLEOTIDE SEQUENCE [MRNA]</scope>
</reference>
<reference key="2">
    <citation type="submission" date="2009-01" db="UniProtKB">
        <authorList>
            <person name="Lubec G."/>
            <person name="Sunyer B."/>
            <person name="Chen W.-Q."/>
        </authorList>
    </citation>
    <scope>PROTEIN SEQUENCE OF 511-520</scope>
    <scope>IDENTIFICATION BY MASS SPECTROMETRY</scope>
    <source>
        <strain>OF1</strain>
        <tissue>Hippocampus</tissue>
    </source>
</reference>
<reference key="3">
    <citation type="journal article" date="2010" name="Cell">
        <title>A tissue-specific atlas of mouse protein phosphorylation and expression.</title>
        <authorList>
            <person name="Huttlin E.L."/>
            <person name="Jedrychowski M.P."/>
            <person name="Elias J.E."/>
            <person name="Goswami T."/>
            <person name="Rad R."/>
            <person name="Beausoleil S.A."/>
            <person name="Villen J."/>
            <person name="Haas W."/>
            <person name="Sowa M.E."/>
            <person name="Gygi S.P."/>
        </authorList>
    </citation>
    <scope>IDENTIFICATION BY MASS SPECTROMETRY [LARGE SCALE ANALYSIS]</scope>
    <source>
        <tissue>Testis</tissue>
    </source>
</reference>
<organism>
    <name type="scientific">Mus musculus</name>
    <name type="common">Mouse</name>
    <dbReference type="NCBI Taxonomy" id="10090"/>
    <lineage>
        <taxon>Eukaryota</taxon>
        <taxon>Metazoa</taxon>
        <taxon>Chordata</taxon>
        <taxon>Craniata</taxon>
        <taxon>Vertebrata</taxon>
        <taxon>Euteleostomi</taxon>
        <taxon>Mammalia</taxon>
        <taxon>Eutheria</taxon>
        <taxon>Euarchontoglires</taxon>
        <taxon>Glires</taxon>
        <taxon>Rodentia</taxon>
        <taxon>Myomorpha</taxon>
        <taxon>Muroidea</taxon>
        <taxon>Muridae</taxon>
        <taxon>Murinae</taxon>
        <taxon>Mus</taxon>
        <taxon>Mus</taxon>
    </lineage>
</organism>
<accession>Q9R0L7</accession>
<comment type="function">
    <text evidence="1">Could play a role in constitutive transport element (CTE)-mediated gene expression by association with DHX9. Increases CTE-dependent nuclear unspliced mRNA export. Proposed to target PRKACA to the nucleus but does not seem to be implicated in the binding of regulatory subunit II of PKA. May be involved in nuclear envelope breakdown and chromatin condensation. May be involved in anchoring nuclear membranes to chromatin in interphase and in releasing membranes from chromating at mitosis. May regulate the initiation phase of DNA replication when associated with TMPO isoform Beta. Required for cell cycle G2/M transition and histone deacetylation during mitosis. In mitotic cells recruits HDAC3 to the vicinity of chromatin leading to deacetylation and subsequent phosphorylation at 'Ser-10' of histone H3; in this function seems to act redundantly with AKAP8. May be involved in regulation of pre-mRNA splicing (By similarity).</text>
</comment>
<comment type="subunit">
    <text evidence="1">Interacts (via N-terminus) with DHX9 (via RGG region). Interacts with TMPO isoform Beta, PRPF40A, RNF43, lamin-B. Interacts with HDAC3; increased during mitosis (By similarity).</text>
</comment>
<comment type="subcellular location">
    <subcellularLocation>
        <location evidence="1">Nucleus</location>
    </subcellularLocation>
    <subcellularLocation>
        <location evidence="1">Nucleus matrix</location>
    </subcellularLocation>
    <subcellularLocation>
        <location evidence="1">Nucleus speckle</location>
    </subcellularLocation>
    <subcellularLocation>
        <location evidence="1">Nucleus</location>
        <location evidence="1">PML body</location>
    </subcellularLocation>
    <subcellularLocation>
        <location evidence="1">Cytoplasm</location>
    </subcellularLocation>
    <text evidence="1">Colocalizes with PRPF40A in the nuclear matrix. Nuclear at steady state but shuttles between the nucleus and cytoplasm. The shuttling property has been questioned. Colocalizes with EBNA-LP in PML bodies.</text>
</comment>
<comment type="PTM">
    <text evidence="1">Phosphorylated on serine or threonine residues possibly by PKA.</text>
</comment>
<comment type="similarity">
    <text evidence="3">Belongs to the AKAP95 family.</text>
</comment>
<name>AKP8L_MOUSE</name>
<feature type="chain" id="PRO_0000075385" description="A-kinase anchor protein 8-like">
    <location>
        <begin position="1"/>
        <end position="642"/>
    </location>
</feature>
<feature type="zinc finger region" description="C2H2 AKAP95-type 1" evidence="3">
    <location>
        <begin position="392"/>
        <end position="414"/>
    </location>
</feature>
<feature type="zinc finger region" description="C2H2 AKAP95-type 2" evidence="3">
    <location>
        <begin position="485"/>
        <end position="508"/>
    </location>
</feature>
<feature type="region of interest" description="Sufficient for activation of CTE-mediated expression" evidence="1">
    <location>
        <begin position="1"/>
        <end position="269"/>
    </location>
</feature>
<feature type="region of interest" description="Disordered" evidence="4">
    <location>
        <begin position="265"/>
        <end position="382"/>
    </location>
</feature>
<feature type="region of interest" description="Disordered" evidence="4">
    <location>
        <begin position="546"/>
        <end position="642"/>
    </location>
</feature>
<feature type="short sequence motif" description="Nuclear localization signal" evidence="2">
    <location>
        <begin position="275"/>
        <end position="280"/>
    </location>
</feature>
<feature type="short sequence motif" description="Nuclear export signal (NES)" evidence="1">
    <location>
        <begin position="281"/>
        <end position="297"/>
    </location>
</feature>
<feature type="short sequence motif" description="Nuclear localization signal" evidence="2">
    <location>
        <begin position="363"/>
        <end position="365"/>
    </location>
</feature>
<feature type="compositionally biased region" description="Basic and acidic residues" evidence="4">
    <location>
        <begin position="288"/>
        <end position="297"/>
    </location>
</feature>
<feature type="compositionally biased region" description="Acidic residues" evidence="4">
    <location>
        <begin position="299"/>
        <end position="315"/>
    </location>
</feature>
<feature type="compositionally biased region" description="Basic and acidic residues" evidence="4">
    <location>
        <begin position="338"/>
        <end position="350"/>
    </location>
</feature>
<feature type="compositionally biased region" description="Acidic residues" evidence="4">
    <location>
        <begin position="553"/>
        <end position="564"/>
    </location>
</feature>
<feature type="compositionally biased region" description="Pro residues" evidence="4">
    <location>
        <begin position="585"/>
        <end position="605"/>
    </location>
</feature>
<feature type="compositionally biased region" description="Acidic residues" evidence="4">
    <location>
        <begin position="631"/>
        <end position="642"/>
    </location>
</feature>
<feature type="modified residue" description="Asymmetric dimethylarginine; alternate" evidence="1">
    <location>
        <position position="209"/>
    </location>
</feature>
<feature type="modified residue" description="Omega-N-methylarginine; alternate" evidence="1">
    <location>
        <position position="209"/>
    </location>
</feature>
<feature type="modified residue" description="Omega-N-methylarginine" evidence="1">
    <location>
        <position position="218"/>
    </location>
</feature>
<feature type="modified residue" description="Omega-N-methylarginine" evidence="1">
    <location>
        <position position="238"/>
    </location>
</feature>
<feature type="modified residue" description="Omega-N-methylarginine" evidence="1">
    <location>
        <position position="248"/>
    </location>
</feature>
<feature type="modified residue" description="N6-acetyllysine" evidence="1">
    <location>
        <position position="258"/>
    </location>
</feature>
<feature type="modified residue" description="Phosphothreonine" evidence="1">
    <location>
        <position position="268"/>
    </location>
</feature>
<feature type="modified residue" description="Phosphoserine" evidence="1">
    <location>
        <position position="284"/>
    </location>
</feature>
<feature type="modified residue" description="Phosphothreonine" evidence="1">
    <location>
        <position position="293"/>
    </location>
</feature>
<feature type="modified residue" description="Phosphoserine" evidence="1">
    <location>
        <position position="298"/>
    </location>
</feature>